<accession>Q9CYN2</accession>
<accession>Q3THR2</accession>
<accession>Q80X74</accession>
<accession>Q921V8</accession>
<accession>Q9CXK1</accession>
<protein>
    <recommendedName>
        <fullName>Signal peptidase complex subunit 2</fullName>
    </recommendedName>
    <alternativeName>
        <fullName>Microsomal signal peptidase 25 kDa subunit</fullName>
        <shortName>SPase 25 kDa subunit</shortName>
    </alternativeName>
</protein>
<organism>
    <name type="scientific">Mus musculus</name>
    <name type="common">Mouse</name>
    <dbReference type="NCBI Taxonomy" id="10090"/>
    <lineage>
        <taxon>Eukaryota</taxon>
        <taxon>Metazoa</taxon>
        <taxon>Chordata</taxon>
        <taxon>Craniata</taxon>
        <taxon>Vertebrata</taxon>
        <taxon>Euteleostomi</taxon>
        <taxon>Mammalia</taxon>
        <taxon>Eutheria</taxon>
        <taxon>Euarchontoglires</taxon>
        <taxon>Glires</taxon>
        <taxon>Rodentia</taxon>
        <taxon>Myomorpha</taxon>
        <taxon>Muroidea</taxon>
        <taxon>Muridae</taxon>
        <taxon>Murinae</taxon>
        <taxon>Mus</taxon>
        <taxon>Mus</taxon>
    </lineage>
</organism>
<comment type="function">
    <text evidence="1 2">Component of the signal peptidase complex (SPC) which catalyzes the cleavage of N-terminal signal sequences from nascent proteins as they are translocated into the lumen of the endoplasmic reticulum (By similarity). Enhances the enzymatic activity of SPC and facilitates the interactions between different components of the translocation site (By similarity).</text>
</comment>
<comment type="subunit">
    <text evidence="2">Component of the signal peptidase complex paralog A (SPC-A) composed of a catalytic subunit SEC11A and three accessory subunits SPCS1, SPCS2 and SPCS3. Component of the signal peptidase complex paralog C (SPC-C) composed of a catalytic subunit SEC11C and three accessory subunits SPCS1, SPCS2 and SPCS3. Within the complex, interacts with SEC11A or SEC11C and SPCS1. The complex induces a local thinning of the ER membrane which is used to measure the length of the signal peptide (SP) h-region of protein substrates. This ensures the selectivity of the complex towards h-regions shorter than 18-20 amino acids.</text>
</comment>
<comment type="subcellular location">
    <subcellularLocation>
        <location evidence="3">Endoplasmic reticulum membrane</location>
        <topology evidence="3">Multi-pass membrane protein</topology>
    </subcellularLocation>
</comment>
<comment type="similarity">
    <text evidence="6">Belongs to the SPCS2 family.</text>
</comment>
<comment type="sequence caution" evidence="6">
    <conflict type="erroneous termination">
        <sequence resource="EMBL-CDS" id="BAB29262"/>
    </conflict>
    <text>Truncated C-terminus.</text>
</comment>
<proteinExistence type="evidence at protein level"/>
<sequence length="226" mass="24978">MAASASQGGRSGGGGGSSGAGGGPSCGTSSSRSGLLDKWKIDDKPVKIDKWDGSAVKNSLDDSAKKVLLEKYKYVENFGLIDGRLTICTISCFFAIVALIWDYMHPFPESKPVLALCVISYFVMMGILTIYTSYKEKSIFLVAHRKDPTGMDPDDIWQLSSSLKRFDDKYTLKLTFISGRTKQQREAEFTKSIAKFFDHSGTLVMDAYEPEISRLHDSLATERKIK</sequence>
<name>SPCS2_MOUSE</name>
<gene>
    <name type="primary">Spcs2</name>
    <name type="synonym">Spc25</name>
</gene>
<dbReference type="EMBL" id="AK014310">
    <property type="protein sequence ID" value="BAB29262.1"/>
    <property type="status" value="ALT_SEQ"/>
    <property type="molecule type" value="mRNA"/>
</dbReference>
<dbReference type="EMBL" id="AK017504">
    <property type="protein sequence ID" value="BAB30777.1"/>
    <property type="molecule type" value="mRNA"/>
</dbReference>
<dbReference type="EMBL" id="AK077510">
    <property type="protein sequence ID" value="BAC36836.1"/>
    <property type="molecule type" value="mRNA"/>
</dbReference>
<dbReference type="EMBL" id="AK134578">
    <property type="protein sequence ID" value="BAE22190.1"/>
    <property type="molecule type" value="mRNA"/>
</dbReference>
<dbReference type="EMBL" id="AK168173">
    <property type="protein sequence ID" value="BAE40134.1"/>
    <property type="molecule type" value="mRNA"/>
</dbReference>
<dbReference type="EMBL" id="BC010547">
    <property type="protein sequence ID" value="AAH10547.2"/>
    <property type="molecule type" value="mRNA"/>
</dbReference>
<dbReference type="EMBL" id="BC050150">
    <property type="protein sequence ID" value="AAH50150.1"/>
    <property type="molecule type" value="mRNA"/>
</dbReference>
<dbReference type="CCDS" id="CCDS40033.1"/>
<dbReference type="RefSeq" id="NP_079944.1">
    <property type="nucleotide sequence ID" value="NM_025668.4"/>
</dbReference>
<dbReference type="SMR" id="Q9CYN2"/>
<dbReference type="BioGRID" id="211603">
    <property type="interactions" value="13"/>
</dbReference>
<dbReference type="FunCoup" id="Q9CYN2">
    <property type="interactions" value="2571"/>
</dbReference>
<dbReference type="IntAct" id="Q9CYN2">
    <property type="interactions" value="9"/>
</dbReference>
<dbReference type="STRING" id="10090.ENSMUSP00000041152"/>
<dbReference type="GlyGen" id="Q9CYN2">
    <property type="glycosylation" value="1 site, 1 O-linked glycan (1 site)"/>
</dbReference>
<dbReference type="iPTMnet" id="Q9CYN2"/>
<dbReference type="PhosphoSitePlus" id="Q9CYN2"/>
<dbReference type="SwissPalm" id="Q9CYN2"/>
<dbReference type="jPOST" id="Q9CYN2"/>
<dbReference type="PaxDb" id="10090-ENSMUSP00000041152"/>
<dbReference type="PeptideAtlas" id="Q9CYN2"/>
<dbReference type="ProteomicsDB" id="261121"/>
<dbReference type="Pumba" id="Q9CYN2"/>
<dbReference type="TopDownProteomics" id="Q9CYN2"/>
<dbReference type="Antibodypedia" id="2848">
    <property type="antibodies" value="122 antibodies from 20 providers"/>
</dbReference>
<dbReference type="DNASU" id="66624"/>
<dbReference type="Ensembl" id="ENSMUST00000036274.8">
    <property type="protein sequence ID" value="ENSMUSP00000041152.7"/>
    <property type="gene ID" value="ENSMUSG00000035227.8"/>
</dbReference>
<dbReference type="GeneID" id="66624"/>
<dbReference type="KEGG" id="mmu:66624"/>
<dbReference type="UCSC" id="uc009imd.1">
    <property type="organism name" value="mouse"/>
</dbReference>
<dbReference type="AGR" id="MGI:1913874"/>
<dbReference type="CTD" id="9789"/>
<dbReference type="MGI" id="MGI:1913874">
    <property type="gene designation" value="Spcs2"/>
</dbReference>
<dbReference type="VEuPathDB" id="HostDB:ENSMUSG00000035227"/>
<dbReference type="eggNOG" id="KOG4072">
    <property type="taxonomic scope" value="Eukaryota"/>
</dbReference>
<dbReference type="GeneTree" id="ENSGT00440000038181"/>
<dbReference type="HOGENOM" id="CLU_094622_0_0_1"/>
<dbReference type="InParanoid" id="Q9CYN2"/>
<dbReference type="OMA" id="INKWDGT"/>
<dbReference type="OrthoDB" id="10673at9989"/>
<dbReference type="PhylomeDB" id="Q9CYN2"/>
<dbReference type="TreeFam" id="TF314545"/>
<dbReference type="Reactome" id="R-MMU-422085">
    <property type="pathway name" value="Synthesis, secretion, and deacylation of Ghrelin"/>
</dbReference>
<dbReference type="BioGRID-ORCS" id="66624">
    <property type="hits" value="19 hits in 79 CRISPR screens"/>
</dbReference>
<dbReference type="ChiTaRS" id="Spcs2">
    <property type="organism name" value="mouse"/>
</dbReference>
<dbReference type="PRO" id="PR:Q9CYN2"/>
<dbReference type="Proteomes" id="UP000000589">
    <property type="component" value="Chromosome 7"/>
</dbReference>
<dbReference type="RNAct" id="Q9CYN2">
    <property type="molecule type" value="protein"/>
</dbReference>
<dbReference type="Bgee" id="ENSMUSG00000035227">
    <property type="expression patterns" value="Expressed in lacrimal gland and 260 other cell types or tissues"/>
</dbReference>
<dbReference type="ExpressionAtlas" id="Q9CYN2">
    <property type="expression patterns" value="baseline and differential"/>
</dbReference>
<dbReference type="GO" id="GO:0005787">
    <property type="term" value="C:signal peptidase complex"/>
    <property type="evidence" value="ECO:0007669"/>
    <property type="project" value="InterPro"/>
</dbReference>
<dbReference type="GO" id="GO:0006465">
    <property type="term" value="P:signal peptide processing"/>
    <property type="evidence" value="ECO:0007669"/>
    <property type="project" value="InterPro"/>
</dbReference>
<dbReference type="InterPro" id="IPR009582">
    <property type="entry name" value="Spc2/SPCS2"/>
</dbReference>
<dbReference type="PANTHER" id="PTHR13085">
    <property type="entry name" value="MICROSOMAL SIGNAL PEPTIDASE 25 KDA SUBUNIT"/>
    <property type="match status" value="1"/>
</dbReference>
<dbReference type="PANTHER" id="PTHR13085:SF0">
    <property type="entry name" value="SIGNAL PEPTIDASE COMPLEX SUBUNIT 2"/>
    <property type="match status" value="1"/>
</dbReference>
<dbReference type="Pfam" id="PF06703">
    <property type="entry name" value="SPC25"/>
    <property type="match status" value="1"/>
</dbReference>
<reference key="1">
    <citation type="journal article" date="2005" name="Science">
        <title>The transcriptional landscape of the mammalian genome.</title>
        <authorList>
            <person name="Carninci P."/>
            <person name="Kasukawa T."/>
            <person name="Katayama S."/>
            <person name="Gough J."/>
            <person name="Frith M.C."/>
            <person name="Maeda N."/>
            <person name="Oyama R."/>
            <person name="Ravasi T."/>
            <person name="Lenhard B."/>
            <person name="Wells C."/>
            <person name="Kodzius R."/>
            <person name="Shimokawa K."/>
            <person name="Bajic V.B."/>
            <person name="Brenner S.E."/>
            <person name="Batalov S."/>
            <person name="Forrest A.R."/>
            <person name="Zavolan M."/>
            <person name="Davis M.J."/>
            <person name="Wilming L.G."/>
            <person name="Aidinis V."/>
            <person name="Allen J.E."/>
            <person name="Ambesi-Impiombato A."/>
            <person name="Apweiler R."/>
            <person name="Aturaliya R.N."/>
            <person name="Bailey T.L."/>
            <person name="Bansal M."/>
            <person name="Baxter L."/>
            <person name="Beisel K.W."/>
            <person name="Bersano T."/>
            <person name="Bono H."/>
            <person name="Chalk A.M."/>
            <person name="Chiu K.P."/>
            <person name="Choudhary V."/>
            <person name="Christoffels A."/>
            <person name="Clutterbuck D.R."/>
            <person name="Crowe M.L."/>
            <person name="Dalla E."/>
            <person name="Dalrymple B.P."/>
            <person name="de Bono B."/>
            <person name="Della Gatta G."/>
            <person name="di Bernardo D."/>
            <person name="Down T."/>
            <person name="Engstrom P."/>
            <person name="Fagiolini M."/>
            <person name="Faulkner G."/>
            <person name="Fletcher C.F."/>
            <person name="Fukushima T."/>
            <person name="Furuno M."/>
            <person name="Futaki S."/>
            <person name="Gariboldi M."/>
            <person name="Georgii-Hemming P."/>
            <person name="Gingeras T.R."/>
            <person name="Gojobori T."/>
            <person name="Green R.E."/>
            <person name="Gustincich S."/>
            <person name="Harbers M."/>
            <person name="Hayashi Y."/>
            <person name="Hensch T.K."/>
            <person name="Hirokawa N."/>
            <person name="Hill D."/>
            <person name="Huminiecki L."/>
            <person name="Iacono M."/>
            <person name="Ikeo K."/>
            <person name="Iwama A."/>
            <person name="Ishikawa T."/>
            <person name="Jakt M."/>
            <person name="Kanapin A."/>
            <person name="Katoh M."/>
            <person name="Kawasawa Y."/>
            <person name="Kelso J."/>
            <person name="Kitamura H."/>
            <person name="Kitano H."/>
            <person name="Kollias G."/>
            <person name="Krishnan S.P."/>
            <person name="Kruger A."/>
            <person name="Kummerfeld S.K."/>
            <person name="Kurochkin I.V."/>
            <person name="Lareau L.F."/>
            <person name="Lazarevic D."/>
            <person name="Lipovich L."/>
            <person name="Liu J."/>
            <person name="Liuni S."/>
            <person name="McWilliam S."/>
            <person name="Madan Babu M."/>
            <person name="Madera M."/>
            <person name="Marchionni L."/>
            <person name="Matsuda H."/>
            <person name="Matsuzawa S."/>
            <person name="Miki H."/>
            <person name="Mignone F."/>
            <person name="Miyake S."/>
            <person name="Morris K."/>
            <person name="Mottagui-Tabar S."/>
            <person name="Mulder N."/>
            <person name="Nakano N."/>
            <person name="Nakauchi H."/>
            <person name="Ng P."/>
            <person name="Nilsson R."/>
            <person name="Nishiguchi S."/>
            <person name="Nishikawa S."/>
            <person name="Nori F."/>
            <person name="Ohara O."/>
            <person name="Okazaki Y."/>
            <person name="Orlando V."/>
            <person name="Pang K.C."/>
            <person name="Pavan W.J."/>
            <person name="Pavesi G."/>
            <person name="Pesole G."/>
            <person name="Petrovsky N."/>
            <person name="Piazza S."/>
            <person name="Reed J."/>
            <person name="Reid J.F."/>
            <person name="Ring B.Z."/>
            <person name="Ringwald M."/>
            <person name="Rost B."/>
            <person name="Ruan Y."/>
            <person name="Salzberg S.L."/>
            <person name="Sandelin A."/>
            <person name="Schneider C."/>
            <person name="Schoenbach C."/>
            <person name="Sekiguchi K."/>
            <person name="Semple C.A."/>
            <person name="Seno S."/>
            <person name="Sessa L."/>
            <person name="Sheng Y."/>
            <person name="Shibata Y."/>
            <person name="Shimada H."/>
            <person name="Shimada K."/>
            <person name="Silva D."/>
            <person name="Sinclair B."/>
            <person name="Sperling S."/>
            <person name="Stupka E."/>
            <person name="Sugiura K."/>
            <person name="Sultana R."/>
            <person name="Takenaka Y."/>
            <person name="Taki K."/>
            <person name="Tammoja K."/>
            <person name="Tan S.L."/>
            <person name="Tang S."/>
            <person name="Taylor M.S."/>
            <person name="Tegner J."/>
            <person name="Teichmann S.A."/>
            <person name="Ueda H.R."/>
            <person name="van Nimwegen E."/>
            <person name="Verardo R."/>
            <person name="Wei C.L."/>
            <person name="Yagi K."/>
            <person name="Yamanishi H."/>
            <person name="Zabarovsky E."/>
            <person name="Zhu S."/>
            <person name="Zimmer A."/>
            <person name="Hide W."/>
            <person name="Bult C."/>
            <person name="Grimmond S.M."/>
            <person name="Teasdale R.D."/>
            <person name="Liu E.T."/>
            <person name="Brusic V."/>
            <person name="Quackenbush J."/>
            <person name="Wahlestedt C."/>
            <person name="Mattick J.S."/>
            <person name="Hume D.A."/>
            <person name="Kai C."/>
            <person name="Sasaki D."/>
            <person name="Tomaru Y."/>
            <person name="Fukuda S."/>
            <person name="Kanamori-Katayama M."/>
            <person name="Suzuki M."/>
            <person name="Aoki J."/>
            <person name="Arakawa T."/>
            <person name="Iida J."/>
            <person name="Imamura K."/>
            <person name="Itoh M."/>
            <person name="Kato T."/>
            <person name="Kawaji H."/>
            <person name="Kawagashira N."/>
            <person name="Kawashima T."/>
            <person name="Kojima M."/>
            <person name="Kondo S."/>
            <person name="Konno H."/>
            <person name="Nakano K."/>
            <person name="Ninomiya N."/>
            <person name="Nishio T."/>
            <person name="Okada M."/>
            <person name="Plessy C."/>
            <person name="Shibata K."/>
            <person name="Shiraki T."/>
            <person name="Suzuki S."/>
            <person name="Tagami M."/>
            <person name="Waki K."/>
            <person name="Watahiki A."/>
            <person name="Okamura-Oho Y."/>
            <person name="Suzuki H."/>
            <person name="Kawai J."/>
            <person name="Hayashizaki Y."/>
        </authorList>
    </citation>
    <scope>NUCLEOTIDE SEQUENCE [LARGE SCALE MRNA]</scope>
    <source>
        <strain>C57BL/6J</strain>
        <strain>DBA/2J</strain>
        <tissue>Embryo</tissue>
        <tissue>Medulla oblongata</tissue>
    </source>
</reference>
<reference key="2">
    <citation type="journal article" date="2004" name="Genome Res.">
        <title>The status, quality, and expansion of the NIH full-length cDNA project: the Mammalian Gene Collection (MGC).</title>
        <authorList>
            <consortium name="The MGC Project Team"/>
        </authorList>
    </citation>
    <scope>NUCLEOTIDE SEQUENCE [LARGE SCALE MRNA]</scope>
    <source>
        <strain>C57BL/6J</strain>
        <strain>FVB/N</strain>
        <tissue>Blastocyst</tissue>
        <tissue>Mammary gland</tissue>
    </source>
</reference>
<reference key="3">
    <citation type="journal article" date="2006" name="Mol. Cell. Proteomics">
        <title>Comprehensive identification of phosphorylation sites in postsynaptic density preparations.</title>
        <authorList>
            <person name="Trinidad J.C."/>
            <person name="Specht C.G."/>
            <person name="Thalhammer A."/>
            <person name="Schoepfer R."/>
            <person name="Burlingame A.L."/>
        </authorList>
    </citation>
    <scope>ACETYLATION [LARGE SCALE ANALYSIS] AT ALA-2</scope>
    <scope>CLEAVAGE OF INITIATOR METHIONINE [LARGE SCALE ANALYSIS]</scope>
    <scope>IDENTIFICATION BY MASS SPECTROMETRY [LARGE SCALE ANALYSIS]</scope>
    <source>
        <tissue>Brain</tissue>
    </source>
</reference>
<reference key="4">
    <citation type="journal article" date="2010" name="Cell">
        <title>A tissue-specific atlas of mouse protein phosphorylation and expression.</title>
        <authorList>
            <person name="Huttlin E.L."/>
            <person name="Jedrychowski M.P."/>
            <person name="Elias J.E."/>
            <person name="Goswami T."/>
            <person name="Rad R."/>
            <person name="Beausoleil S.A."/>
            <person name="Villen J."/>
            <person name="Haas W."/>
            <person name="Sowa M.E."/>
            <person name="Gygi S.P."/>
        </authorList>
    </citation>
    <scope>IDENTIFICATION BY MASS SPECTROMETRY [LARGE SCALE ANALYSIS]</scope>
    <source>
        <tissue>Brain</tissue>
        <tissue>Brown adipose tissue</tissue>
        <tissue>Heart</tissue>
        <tissue>Kidney</tissue>
        <tissue>Liver</tissue>
        <tissue>Lung</tissue>
        <tissue>Pancreas</tissue>
        <tissue>Spleen</tissue>
        <tissue>Testis</tissue>
    </source>
</reference>
<evidence type="ECO:0000250" key="1">
    <source>
        <dbReference type="UniProtKB" id="Q04969"/>
    </source>
</evidence>
<evidence type="ECO:0000250" key="2">
    <source>
        <dbReference type="UniProtKB" id="Q15005"/>
    </source>
</evidence>
<evidence type="ECO:0000250" key="3">
    <source>
        <dbReference type="UniProtKB" id="Q28250"/>
    </source>
</evidence>
<evidence type="ECO:0000255" key="4"/>
<evidence type="ECO:0000256" key="5">
    <source>
        <dbReference type="SAM" id="MobiDB-lite"/>
    </source>
</evidence>
<evidence type="ECO:0000305" key="6"/>
<evidence type="ECO:0007744" key="7">
    <source>
    </source>
</evidence>
<keyword id="KW-0007">Acetylation</keyword>
<keyword id="KW-0256">Endoplasmic reticulum</keyword>
<keyword id="KW-0472">Membrane</keyword>
<keyword id="KW-1185">Reference proteome</keyword>
<keyword id="KW-0812">Transmembrane</keyword>
<keyword id="KW-1133">Transmembrane helix</keyword>
<feature type="initiator methionine" description="Removed" evidence="7">
    <location>
        <position position="1"/>
    </location>
</feature>
<feature type="chain" id="PRO_0000221160" description="Signal peptidase complex subunit 2">
    <location>
        <begin position="2"/>
        <end position="226"/>
    </location>
</feature>
<feature type="topological domain" description="Cytoplasmic" evidence="3">
    <location>
        <begin position="2"/>
        <end position="86"/>
    </location>
</feature>
<feature type="transmembrane region" description="Helical" evidence="4">
    <location>
        <begin position="87"/>
        <end position="107"/>
    </location>
</feature>
<feature type="topological domain" description="Lumenal" evidence="3">
    <location>
        <begin position="108"/>
        <end position="111"/>
    </location>
</feature>
<feature type="transmembrane region" description="Helical" evidence="4">
    <location>
        <begin position="112"/>
        <end position="132"/>
    </location>
</feature>
<feature type="topological domain" description="Cytoplasmic" evidence="3">
    <location>
        <begin position="133"/>
        <end position="226"/>
    </location>
</feature>
<feature type="region of interest" description="Disordered" evidence="5">
    <location>
        <begin position="1"/>
        <end position="37"/>
    </location>
</feature>
<feature type="compositionally biased region" description="Gly residues" evidence="5">
    <location>
        <begin position="9"/>
        <end position="25"/>
    </location>
</feature>
<feature type="modified residue" description="N-acetylalanine" evidence="7">
    <location>
        <position position="2"/>
    </location>
</feature>
<feature type="modified residue" description="N6-acetyllysine" evidence="2">
    <location>
        <position position="169"/>
    </location>
</feature>
<feature type="modified residue" description="N6-acetyllysine" evidence="2">
    <location>
        <position position="191"/>
    </location>
</feature>
<feature type="sequence conflict" description="In Ref. 2; AAH50150." evidence="6" ref="2">
    <original>S</original>
    <variation>P</variation>
    <location>
        <position position="110"/>
    </location>
</feature>
<feature type="sequence conflict" description="In Ref. 1; BAB29262." evidence="6" ref="1">
    <original>E</original>
    <variation>D</variation>
    <location>
        <position position="209"/>
    </location>
</feature>